<organism>
    <name type="scientific">Staphylococcus epidermidis (strain ATCC 35984 / DSM 28319 / BCRC 17069 / CCUG 31568 / BM 3577 / RP62A)</name>
    <dbReference type="NCBI Taxonomy" id="176279"/>
    <lineage>
        <taxon>Bacteria</taxon>
        <taxon>Bacillati</taxon>
        <taxon>Bacillota</taxon>
        <taxon>Bacilli</taxon>
        <taxon>Bacillales</taxon>
        <taxon>Staphylococcaceae</taxon>
        <taxon>Staphylococcus</taxon>
    </lineage>
</organism>
<protein>
    <recommendedName>
        <fullName evidence="1">Valine--tRNA ligase</fullName>
        <ecNumber evidence="1">6.1.1.9</ecNumber>
    </recommendedName>
    <alternativeName>
        <fullName evidence="1">Valyl-tRNA synthetase</fullName>
        <shortName evidence="1">ValRS</shortName>
    </alternativeName>
</protein>
<feature type="chain" id="PRO_0000224567" description="Valine--tRNA ligase">
    <location>
        <begin position="1"/>
        <end position="876"/>
    </location>
</feature>
<feature type="coiled-coil region" evidence="1">
    <location>
        <begin position="805"/>
        <end position="876"/>
    </location>
</feature>
<feature type="short sequence motif" description="'HIGH' region">
    <location>
        <begin position="44"/>
        <end position="54"/>
    </location>
</feature>
<feature type="short sequence motif" description="'KMSKS' region">
    <location>
        <begin position="520"/>
        <end position="524"/>
    </location>
</feature>
<feature type="binding site" evidence="1">
    <location>
        <position position="523"/>
    </location>
    <ligand>
        <name>ATP</name>
        <dbReference type="ChEBI" id="CHEBI:30616"/>
    </ligand>
</feature>
<sequence length="876" mass="101749">MEMKPKYDPREVEKGRYEEWVSNGYFKPSEDKSKEAYTIVIPPPNVTGKLHLGHAWDTTLQDIITRMKRMQGYDTLYLPGMDHAGIATQAKVEAKLNEQGISRHDLGREKFLQQAWDWKEEYATFIRQQWAKLGLGLDYSRERFTLDDGLSKAVRKVFVDLYNKGIIYRGERIINWDPKARTALSDIEVIHEDVQGAFYHFKYPYADGNGYIEIATTRPETMLGDTAIVVNPNDERYKDVIGKTVILPIVGRELPILADEYVDIEFGSGAMKVTPAHDPNDFEIGQRHQLENIIVMDEYGKMNDKADKYKGMDRFDCRNQLVKDLKEQDLVIKIEEHTHSVGHSERSGAIVEPYLSTQWFVKMKPLAQRALDNQNTKDRIDFFPGRFENTFNRWMEEIRDWTISRQLWWGHQIPAWYHKDTGEVFVGEEAPEDIENWIQDEDVLDTWFSSALWPFSTLGWPDTNADDFKRYYPTNALVTGYDIIFFWVARMIFQGLEFTDRRPFNDVLLHGLVRAEDGRKMSKSLGNGVDPMDVIDEYGADSLRYFLATGSSPGHDLRYSTEKVESVWNFINKIWNAARFSLMNIGEDFKVEDIDLSGNLSLADQWILTRLNETISTVTELSDKYEFGEVGRALYNFIWDEFCDWYIEMSKIPMNGEDESQKQTTRSVLSYVLDKIMKMLHPFMPFVTETIWQSLPHHGETIVKANWPTVDQALIFNESKQTMEQLVEIIKSVRQSRVEVNTPLSKAIPILIQTKDEKIKHTLMDNISYLHKFCNPSQLTIDTEIEIPEKAMTTVVVAGKVVLPLEGLIDMDKEIARLEKELDKLQSELDRVDKKLSNENFVNKAPEKIINEEKEKQQHYQEKYNGVKSRIEQLKA</sequence>
<comment type="function">
    <text evidence="1">Catalyzes the attachment of valine to tRNA(Val). As ValRS can inadvertently accommodate and process structurally similar amino acids such as threonine, to avoid such errors, it has a 'posttransfer' editing activity that hydrolyzes mischarged Thr-tRNA(Val) in a tRNA-dependent manner.</text>
</comment>
<comment type="catalytic activity">
    <reaction evidence="1">
        <text>tRNA(Val) + L-valine + ATP = L-valyl-tRNA(Val) + AMP + diphosphate</text>
        <dbReference type="Rhea" id="RHEA:10704"/>
        <dbReference type="Rhea" id="RHEA-COMP:9672"/>
        <dbReference type="Rhea" id="RHEA-COMP:9708"/>
        <dbReference type="ChEBI" id="CHEBI:30616"/>
        <dbReference type="ChEBI" id="CHEBI:33019"/>
        <dbReference type="ChEBI" id="CHEBI:57762"/>
        <dbReference type="ChEBI" id="CHEBI:78442"/>
        <dbReference type="ChEBI" id="CHEBI:78537"/>
        <dbReference type="ChEBI" id="CHEBI:456215"/>
        <dbReference type="EC" id="6.1.1.9"/>
    </reaction>
</comment>
<comment type="subunit">
    <text evidence="1">Monomer.</text>
</comment>
<comment type="subcellular location">
    <subcellularLocation>
        <location evidence="1">Cytoplasm</location>
    </subcellularLocation>
</comment>
<comment type="domain">
    <text evidence="1">ValRS has two distinct active sites: one for aminoacylation and one for editing. The misactivated threonine is translocated from the active site to the editing site.</text>
</comment>
<comment type="domain">
    <text evidence="1">The C-terminal coiled-coil domain is crucial for aminoacylation activity.</text>
</comment>
<comment type="similarity">
    <text evidence="1">Belongs to the class-I aminoacyl-tRNA synthetase family. ValS type 1 subfamily.</text>
</comment>
<keyword id="KW-0030">Aminoacyl-tRNA synthetase</keyword>
<keyword id="KW-0067">ATP-binding</keyword>
<keyword id="KW-0175">Coiled coil</keyword>
<keyword id="KW-0963">Cytoplasm</keyword>
<keyword id="KW-0436">Ligase</keyword>
<keyword id="KW-0547">Nucleotide-binding</keyword>
<keyword id="KW-0648">Protein biosynthesis</keyword>
<keyword id="KW-1185">Reference proteome</keyword>
<accession>Q5HNN9</accession>
<reference key="1">
    <citation type="journal article" date="2005" name="J. Bacteriol.">
        <title>Insights on evolution of virulence and resistance from the complete genome analysis of an early methicillin-resistant Staphylococcus aureus strain and a biofilm-producing methicillin-resistant Staphylococcus epidermidis strain.</title>
        <authorList>
            <person name="Gill S.R."/>
            <person name="Fouts D.E."/>
            <person name="Archer G.L."/>
            <person name="Mongodin E.F."/>
            <person name="DeBoy R.T."/>
            <person name="Ravel J."/>
            <person name="Paulsen I.T."/>
            <person name="Kolonay J.F."/>
            <person name="Brinkac L.M."/>
            <person name="Beanan M.J."/>
            <person name="Dodson R.J."/>
            <person name="Daugherty S.C."/>
            <person name="Madupu R."/>
            <person name="Angiuoli S.V."/>
            <person name="Durkin A.S."/>
            <person name="Haft D.H."/>
            <person name="Vamathevan J.J."/>
            <person name="Khouri H."/>
            <person name="Utterback T.R."/>
            <person name="Lee C."/>
            <person name="Dimitrov G."/>
            <person name="Jiang L."/>
            <person name="Qin H."/>
            <person name="Weidman J."/>
            <person name="Tran K."/>
            <person name="Kang K.H."/>
            <person name="Hance I.R."/>
            <person name="Nelson K.E."/>
            <person name="Fraser C.M."/>
        </authorList>
    </citation>
    <scope>NUCLEOTIDE SEQUENCE [LARGE SCALE GENOMIC DNA]</scope>
    <source>
        <strain>ATCC 35984 / DSM 28319 / BCRC 17069 / CCUG 31568 / BM 3577 / RP62A</strain>
    </source>
</reference>
<evidence type="ECO:0000255" key="1">
    <source>
        <dbReference type="HAMAP-Rule" id="MF_02004"/>
    </source>
</evidence>
<name>SYV_STAEQ</name>
<gene>
    <name evidence="1" type="primary">valS</name>
    <name type="ordered locus">SERP1228</name>
</gene>
<proteinExistence type="inferred from homology"/>
<dbReference type="EC" id="6.1.1.9" evidence="1"/>
<dbReference type="EMBL" id="CP000029">
    <property type="protein sequence ID" value="AAW54579.1"/>
    <property type="molecule type" value="Genomic_DNA"/>
</dbReference>
<dbReference type="RefSeq" id="WP_001830862.1">
    <property type="nucleotide sequence ID" value="NC_002976.3"/>
</dbReference>
<dbReference type="SMR" id="Q5HNN9"/>
<dbReference type="STRING" id="176279.SERP1228"/>
<dbReference type="KEGG" id="ser:SERP1228"/>
<dbReference type="eggNOG" id="COG0525">
    <property type="taxonomic scope" value="Bacteria"/>
</dbReference>
<dbReference type="HOGENOM" id="CLU_001493_0_2_9"/>
<dbReference type="Proteomes" id="UP000000531">
    <property type="component" value="Chromosome"/>
</dbReference>
<dbReference type="GO" id="GO:0005829">
    <property type="term" value="C:cytosol"/>
    <property type="evidence" value="ECO:0007669"/>
    <property type="project" value="TreeGrafter"/>
</dbReference>
<dbReference type="GO" id="GO:0002161">
    <property type="term" value="F:aminoacyl-tRNA deacylase activity"/>
    <property type="evidence" value="ECO:0007669"/>
    <property type="project" value="InterPro"/>
</dbReference>
<dbReference type="GO" id="GO:0005524">
    <property type="term" value="F:ATP binding"/>
    <property type="evidence" value="ECO:0007669"/>
    <property type="project" value="UniProtKB-UniRule"/>
</dbReference>
<dbReference type="GO" id="GO:0004832">
    <property type="term" value="F:valine-tRNA ligase activity"/>
    <property type="evidence" value="ECO:0007669"/>
    <property type="project" value="UniProtKB-UniRule"/>
</dbReference>
<dbReference type="GO" id="GO:0006438">
    <property type="term" value="P:valyl-tRNA aminoacylation"/>
    <property type="evidence" value="ECO:0007669"/>
    <property type="project" value="UniProtKB-UniRule"/>
</dbReference>
<dbReference type="CDD" id="cd07962">
    <property type="entry name" value="Anticodon_Ia_Val"/>
    <property type="match status" value="1"/>
</dbReference>
<dbReference type="CDD" id="cd00817">
    <property type="entry name" value="ValRS_core"/>
    <property type="match status" value="1"/>
</dbReference>
<dbReference type="FunFam" id="1.10.287.380:FF:000001">
    <property type="entry name" value="Valine--tRNA ligase"/>
    <property type="match status" value="1"/>
</dbReference>
<dbReference type="FunFam" id="1.10.730.10:FF:000014">
    <property type="entry name" value="Valine--tRNA ligase"/>
    <property type="match status" value="1"/>
</dbReference>
<dbReference type="FunFam" id="3.40.50.620:FF:000032">
    <property type="entry name" value="Valine--tRNA ligase"/>
    <property type="match status" value="1"/>
</dbReference>
<dbReference type="FunFam" id="3.40.50.620:FF:000098">
    <property type="entry name" value="Valine--tRNA ligase"/>
    <property type="match status" value="1"/>
</dbReference>
<dbReference type="FunFam" id="3.90.740.10:FF:000005">
    <property type="entry name" value="Valine--tRNA ligase, mitochondrial"/>
    <property type="match status" value="1"/>
</dbReference>
<dbReference type="Gene3D" id="3.40.50.620">
    <property type="entry name" value="HUPs"/>
    <property type="match status" value="2"/>
</dbReference>
<dbReference type="Gene3D" id="1.10.730.10">
    <property type="entry name" value="Isoleucyl-tRNA Synthetase, Domain 1"/>
    <property type="match status" value="1"/>
</dbReference>
<dbReference type="Gene3D" id="1.10.287.380">
    <property type="entry name" value="Valyl-tRNA synthetase, C-terminal domain"/>
    <property type="match status" value="1"/>
</dbReference>
<dbReference type="Gene3D" id="3.90.740.10">
    <property type="entry name" value="Valyl/Leucyl/Isoleucyl-tRNA synthetase, editing domain"/>
    <property type="match status" value="1"/>
</dbReference>
<dbReference type="HAMAP" id="MF_02004">
    <property type="entry name" value="Val_tRNA_synth_type1"/>
    <property type="match status" value="1"/>
</dbReference>
<dbReference type="InterPro" id="IPR001412">
    <property type="entry name" value="aa-tRNA-synth_I_CS"/>
</dbReference>
<dbReference type="InterPro" id="IPR002300">
    <property type="entry name" value="aa-tRNA-synth_Ia"/>
</dbReference>
<dbReference type="InterPro" id="IPR033705">
    <property type="entry name" value="Anticodon_Ia_Val"/>
</dbReference>
<dbReference type="InterPro" id="IPR013155">
    <property type="entry name" value="M/V/L/I-tRNA-synth_anticd-bd"/>
</dbReference>
<dbReference type="InterPro" id="IPR014729">
    <property type="entry name" value="Rossmann-like_a/b/a_fold"/>
</dbReference>
<dbReference type="InterPro" id="IPR010978">
    <property type="entry name" value="tRNA-bd_arm"/>
</dbReference>
<dbReference type="InterPro" id="IPR009080">
    <property type="entry name" value="tRNAsynth_Ia_anticodon-bd"/>
</dbReference>
<dbReference type="InterPro" id="IPR037118">
    <property type="entry name" value="Val-tRNA_synth_C_sf"/>
</dbReference>
<dbReference type="InterPro" id="IPR019499">
    <property type="entry name" value="Val-tRNA_synth_tRNA-bd"/>
</dbReference>
<dbReference type="InterPro" id="IPR009008">
    <property type="entry name" value="Val/Leu/Ile-tRNA-synth_edit"/>
</dbReference>
<dbReference type="InterPro" id="IPR002303">
    <property type="entry name" value="Valyl-tRNA_ligase"/>
</dbReference>
<dbReference type="NCBIfam" id="NF004349">
    <property type="entry name" value="PRK05729.1"/>
    <property type="match status" value="1"/>
</dbReference>
<dbReference type="NCBIfam" id="TIGR00422">
    <property type="entry name" value="valS"/>
    <property type="match status" value="1"/>
</dbReference>
<dbReference type="PANTHER" id="PTHR11946:SF93">
    <property type="entry name" value="VALINE--TRNA LIGASE, CHLOROPLASTIC_MITOCHONDRIAL 2"/>
    <property type="match status" value="1"/>
</dbReference>
<dbReference type="PANTHER" id="PTHR11946">
    <property type="entry name" value="VALYL-TRNA SYNTHETASES"/>
    <property type="match status" value="1"/>
</dbReference>
<dbReference type="Pfam" id="PF08264">
    <property type="entry name" value="Anticodon_1"/>
    <property type="match status" value="1"/>
</dbReference>
<dbReference type="Pfam" id="PF00133">
    <property type="entry name" value="tRNA-synt_1"/>
    <property type="match status" value="1"/>
</dbReference>
<dbReference type="Pfam" id="PF10458">
    <property type="entry name" value="Val_tRNA-synt_C"/>
    <property type="match status" value="1"/>
</dbReference>
<dbReference type="PRINTS" id="PR00986">
    <property type="entry name" value="TRNASYNTHVAL"/>
</dbReference>
<dbReference type="SUPFAM" id="SSF47323">
    <property type="entry name" value="Anticodon-binding domain of a subclass of class I aminoacyl-tRNA synthetases"/>
    <property type="match status" value="1"/>
</dbReference>
<dbReference type="SUPFAM" id="SSF52374">
    <property type="entry name" value="Nucleotidylyl transferase"/>
    <property type="match status" value="1"/>
</dbReference>
<dbReference type="SUPFAM" id="SSF46589">
    <property type="entry name" value="tRNA-binding arm"/>
    <property type="match status" value="1"/>
</dbReference>
<dbReference type="SUPFAM" id="SSF50677">
    <property type="entry name" value="ValRS/IleRS/LeuRS editing domain"/>
    <property type="match status" value="1"/>
</dbReference>
<dbReference type="PROSITE" id="PS00178">
    <property type="entry name" value="AA_TRNA_LIGASE_I"/>
    <property type="match status" value="1"/>
</dbReference>